<accession>A2BP56</accession>
<reference key="1">
    <citation type="journal article" date="2007" name="PLoS Genet.">
        <title>Patterns and implications of gene gain and loss in the evolution of Prochlorococcus.</title>
        <authorList>
            <person name="Kettler G.C."/>
            <person name="Martiny A.C."/>
            <person name="Huang K."/>
            <person name="Zucker J."/>
            <person name="Coleman M.L."/>
            <person name="Rodrigue S."/>
            <person name="Chen F."/>
            <person name="Lapidus A."/>
            <person name="Ferriera S."/>
            <person name="Johnson J."/>
            <person name="Steglich C."/>
            <person name="Church G.M."/>
            <person name="Richardson P."/>
            <person name="Chisholm S.W."/>
        </authorList>
    </citation>
    <scope>NUCLEOTIDE SEQUENCE [LARGE SCALE GENOMIC DNA]</scope>
    <source>
        <strain>AS9601</strain>
    </source>
</reference>
<proteinExistence type="inferred from homology"/>
<dbReference type="EMBL" id="CP000551">
    <property type="protein sequence ID" value="ABM69567.1"/>
    <property type="molecule type" value="Genomic_DNA"/>
</dbReference>
<dbReference type="RefSeq" id="WP_011817749.1">
    <property type="nucleotide sequence ID" value="NC_008816.1"/>
</dbReference>
<dbReference type="SMR" id="A2BP56"/>
<dbReference type="STRING" id="146891.A9601_02791"/>
<dbReference type="KEGG" id="pmb:A9601_02791"/>
<dbReference type="eggNOG" id="COG1058">
    <property type="taxonomic scope" value="Bacteria"/>
</dbReference>
<dbReference type="eggNOG" id="COG1546">
    <property type="taxonomic scope" value="Bacteria"/>
</dbReference>
<dbReference type="HOGENOM" id="CLU_030805_9_3_3"/>
<dbReference type="OrthoDB" id="9801454at2"/>
<dbReference type="Proteomes" id="UP000002590">
    <property type="component" value="Chromosome"/>
</dbReference>
<dbReference type="CDD" id="cd00885">
    <property type="entry name" value="cinA"/>
    <property type="match status" value="1"/>
</dbReference>
<dbReference type="Gene3D" id="3.30.70.2860">
    <property type="match status" value="1"/>
</dbReference>
<dbReference type="Gene3D" id="3.90.950.20">
    <property type="entry name" value="CinA-like"/>
    <property type="match status" value="1"/>
</dbReference>
<dbReference type="Gene3D" id="3.40.980.10">
    <property type="entry name" value="MoaB/Mog-like domain"/>
    <property type="match status" value="1"/>
</dbReference>
<dbReference type="HAMAP" id="MF_00226_B">
    <property type="entry name" value="CinA_B"/>
    <property type="match status" value="1"/>
</dbReference>
<dbReference type="InterPro" id="IPR050101">
    <property type="entry name" value="CinA"/>
</dbReference>
<dbReference type="InterPro" id="IPR036653">
    <property type="entry name" value="CinA-like_C"/>
</dbReference>
<dbReference type="InterPro" id="IPR008136">
    <property type="entry name" value="CinA_C"/>
</dbReference>
<dbReference type="InterPro" id="IPR041424">
    <property type="entry name" value="CinA_KH"/>
</dbReference>
<dbReference type="InterPro" id="IPR008135">
    <property type="entry name" value="Competence-induced_CinA"/>
</dbReference>
<dbReference type="InterPro" id="IPR036425">
    <property type="entry name" value="MoaB/Mog-like_dom_sf"/>
</dbReference>
<dbReference type="InterPro" id="IPR001453">
    <property type="entry name" value="MoaB/Mog_dom"/>
</dbReference>
<dbReference type="NCBIfam" id="TIGR00200">
    <property type="entry name" value="cinA_nterm"/>
    <property type="match status" value="1"/>
</dbReference>
<dbReference type="NCBIfam" id="TIGR00177">
    <property type="entry name" value="molyb_syn"/>
    <property type="match status" value="1"/>
</dbReference>
<dbReference type="NCBIfam" id="TIGR00199">
    <property type="entry name" value="PncC_domain"/>
    <property type="match status" value="1"/>
</dbReference>
<dbReference type="NCBIfam" id="NF001813">
    <property type="entry name" value="PRK00549.1"/>
    <property type="match status" value="1"/>
</dbReference>
<dbReference type="PANTHER" id="PTHR13939">
    <property type="entry name" value="NICOTINAMIDE-NUCLEOTIDE AMIDOHYDROLASE PNCC"/>
    <property type="match status" value="1"/>
</dbReference>
<dbReference type="PANTHER" id="PTHR13939:SF0">
    <property type="entry name" value="NMN AMIDOHYDROLASE-LIKE PROTEIN YFAY"/>
    <property type="match status" value="1"/>
</dbReference>
<dbReference type="Pfam" id="PF02464">
    <property type="entry name" value="CinA"/>
    <property type="match status" value="1"/>
</dbReference>
<dbReference type="Pfam" id="PF18146">
    <property type="entry name" value="CinA_KH"/>
    <property type="match status" value="1"/>
</dbReference>
<dbReference type="Pfam" id="PF00994">
    <property type="entry name" value="MoCF_biosynth"/>
    <property type="match status" value="1"/>
</dbReference>
<dbReference type="PIRSF" id="PIRSF006728">
    <property type="entry name" value="CinA"/>
    <property type="match status" value="1"/>
</dbReference>
<dbReference type="SMART" id="SM00852">
    <property type="entry name" value="MoCF_biosynth"/>
    <property type="match status" value="1"/>
</dbReference>
<dbReference type="SUPFAM" id="SSF142433">
    <property type="entry name" value="CinA-like"/>
    <property type="match status" value="1"/>
</dbReference>
<dbReference type="SUPFAM" id="SSF53218">
    <property type="entry name" value="Molybdenum cofactor biosynthesis proteins"/>
    <property type="match status" value="1"/>
</dbReference>
<evidence type="ECO:0000255" key="1">
    <source>
        <dbReference type="HAMAP-Rule" id="MF_00226"/>
    </source>
</evidence>
<name>CINAL_PROMS</name>
<sequence>MSPNSKGVEILSIGTELLLGNIINTNAQWISEQLSQLGLNHFRQSTVGDNCDRIVKVIQEISKRSNLLITTGGLGPTPDDLTTEAIAKSFNVNLFERPHLWDEIKQKLPNSKLQDDSSSLRKQCLFPKNAQIINNPRGTAPGMIWEPIEGFTILTFPGVPSEMKTMWEETACDFIKTKFSDNYSFFSNTLKFAGIGESSVAEKINDLLNLKNPTVAPYANLGEVKLRITARAKNHLEAKNIIQPVKEKLKKDFSKFIFGENDDTLPSVLIRELTERNQTIVFAESCTGGLLSSSLTSISGSSKVFKGSVVSYSNELKNSLLNISEEKLTKYGAVSEEVCESMAINAKEKLGADWAIAISGIAGPKGGSQDKPVGLVYISISGPNNHITNIKKLFNSTRNRVEIQTLSVNVCLNSLRLILLSNSK</sequence>
<comment type="similarity">
    <text evidence="1">Belongs to the CinA family.</text>
</comment>
<organism>
    <name type="scientific">Prochlorococcus marinus (strain AS9601)</name>
    <dbReference type="NCBI Taxonomy" id="146891"/>
    <lineage>
        <taxon>Bacteria</taxon>
        <taxon>Bacillati</taxon>
        <taxon>Cyanobacteriota</taxon>
        <taxon>Cyanophyceae</taxon>
        <taxon>Synechococcales</taxon>
        <taxon>Prochlorococcaceae</taxon>
        <taxon>Prochlorococcus</taxon>
    </lineage>
</organism>
<protein>
    <recommendedName>
        <fullName evidence="1">CinA-like protein</fullName>
    </recommendedName>
</protein>
<gene>
    <name type="ordered locus">A9601_02791</name>
</gene>
<feature type="chain" id="PRO_0000336517" description="CinA-like protein">
    <location>
        <begin position="1"/>
        <end position="424"/>
    </location>
</feature>